<sequence length="393" mass="43596">MLQRHSLKLGKFSIRTLATGAPLDASKLKITRNPNPSKPRPNEELVFGQTFTDHMLTIPWSAKEGWGTPHIKPYGNLSLDPSACVFHYAFELFEGLKAYRTPQNTITMFRPDKNMARMNKSAARICLPTFESEELIKLTGKLIEQDKHLVPQGNGYSLYIRPTMIGTSKGLGVGTPSEALLYVITSPVGPYYKTGFKAVRLEATDYATRAWPGGVGDKKLGANYAPCILPQLQAAKRGYQQNLWLFGPEKNITEVGTMNVFFVFLNKVTGKKELVTAPLDGTILEGVTRDSVLTLARDKLDPQEWDINERYYTITEVATRAKQGELLEAFGSGTAAVVSPIKEIGWNNEDIHVPLLPGEQCGALTKQVAQWIADIQYGRVNYGNWSKTVADLN</sequence>
<organism>
    <name type="scientific">Saccharomyces cerevisiae (strain ATCC 204508 / S288c)</name>
    <name type="common">Baker's yeast</name>
    <dbReference type="NCBI Taxonomy" id="559292"/>
    <lineage>
        <taxon>Eukaryota</taxon>
        <taxon>Fungi</taxon>
        <taxon>Dikarya</taxon>
        <taxon>Ascomycota</taxon>
        <taxon>Saccharomycotina</taxon>
        <taxon>Saccharomycetes</taxon>
        <taxon>Saccharomycetales</taxon>
        <taxon>Saccharomycetaceae</taxon>
        <taxon>Saccharomyces</taxon>
    </lineage>
</organism>
<name>BCA1_YEAST</name>
<feature type="transit peptide" description="Mitochondrion" evidence="2">
    <location>
        <begin position="1"/>
        <end position="16"/>
    </location>
</feature>
<feature type="chain" id="PRO_0000001281" description="Branched-chain-amino-acid aminotransferase, mitochondrial">
    <location>
        <begin position="17"/>
        <end position="393"/>
    </location>
</feature>
<feature type="modified residue" description="N6-(pyridoxal phosphate)lysine" evidence="1">
    <location>
        <position position="219"/>
    </location>
</feature>
<feature type="modified residue" description="Phosphothreonine" evidence="24">
    <location>
        <position position="315"/>
    </location>
</feature>
<comment type="function">
    <text evidence="4 5 6 8 9 10 11">Mitochondrial isozyme of branched-chain-amino-acid aminotransferase, involved in the biosynthesis of the branched chain amino acids (BCAAs) leucine, isoleucine, and valine (PubMed:21267457, PubMed:8702755, PubMed:8798704). Catalyzes the formation of methionine from 2-keto-4-methylthiobutyrate (KMTB) in the methionine salvage pathway primarily using BCAAs (leucine, isoleucine, and valine) as the amino donors (PubMed:18625006). Appears to be involved in the regulation of the cell cycle, although this may be indirect via metabolic changes (PubMed:29850466, PubMed:37497662). Connects BCAAs and TCA-cycle metabolism governing TCA-cycle flux to activate TORC1 signaling (PubMed:26659116, PubMed:37497662). High copy suppressor of a temperature-sensitive mutation in the ABC transporter, ATM1 (PubMed:8798704).</text>
</comment>
<comment type="catalytic activity">
    <reaction evidence="23">
        <text>L-leucine + 2-oxoglutarate = 4-methyl-2-oxopentanoate + L-glutamate</text>
        <dbReference type="Rhea" id="RHEA:18321"/>
        <dbReference type="ChEBI" id="CHEBI:16810"/>
        <dbReference type="ChEBI" id="CHEBI:17865"/>
        <dbReference type="ChEBI" id="CHEBI:29985"/>
        <dbReference type="ChEBI" id="CHEBI:57427"/>
        <dbReference type="EC" id="2.6.1.42"/>
    </reaction>
    <physiologicalReaction direction="right-to-left" evidence="23">
        <dbReference type="Rhea" id="RHEA:18323"/>
    </physiologicalReaction>
</comment>
<comment type="catalytic activity">
    <reaction evidence="23">
        <text>L-isoleucine + 2-oxoglutarate = (S)-3-methyl-2-oxopentanoate + L-glutamate</text>
        <dbReference type="Rhea" id="RHEA:24801"/>
        <dbReference type="ChEBI" id="CHEBI:16810"/>
        <dbReference type="ChEBI" id="CHEBI:29985"/>
        <dbReference type="ChEBI" id="CHEBI:35146"/>
        <dbReference type="ChEBI" id="CHEBI:58045"/>
        <dbReference type="EC" id="2.6.1.42"/>
    </reaction>
    <physiologicalReaction direction="right-to-left" evidence="23">
        <dbReference type="Rhea" id="RHEA:24803"/>
    </physiologicalReaction>
</comment>
<comment type="catalytic activity">
    <reaction evidence="23">
        <text>L-valine + 2-oxoglutarate = 3-methyl-2-oxobutanoate + L-glutamate</text>
        <dbReference type="Rhea" id="RHEA:24813"/>
        <dbReference type="ChEBI" id="CHEBI:11851"/>
        <dbReference type="ChEBI" id="CHEBI:16810"/>
        <dbReference type="ChEBI" id="CHEBI:29985"/>
        <dbReference type="ChEBI" id="CHEBI:57762"/>
        <dbReference type="EC" id="2.6.1.42"/>
    </reaction>
    <physiologicalReaction direction="right-to-left" evidence="23">
        <dbReference type="Rhea" id="RHEA:24815"/>
    </physiologicalReaction>
</comment>
<comment type="catalytic activity">
    <reaction evidence="16">
        <text>a 2-oxocarboxylate + L-methionine = 4-methylsulfanyl-2-oxobutanoate + an L-alpha-amino acid</text>
        <dbReference type="Rhea" id="RHEA:31763"/>
        <dbReference type="ChEBI" id="CHEBI:16723"/>
        <dbReference type="ChEBI" id="CHEBI:35179"/>
        <dbReference type="ChEBI" id="CHEBI:57844"/>
        <dbReference type="ChEBI" id="CHEBI:59869"/>
    </reaction>
    <physiologicalReaction direction="right-to-left" evidence="16">
        <dbReference type="Rhea" id="RHEA:31765"/>
    </physiologicalReaction>
</comment>
<comment type="cofactor">
    <cofactor evidence="1">
        <name>pyridoxal 5'-phosphate</name>
        <dbReference type="ChEBI" id="CHEBI:597326"/>
    </cofactor>
</comment>
<comment type="pathway">
    <text evidence="17 22 23">Amino-acid biosynthesis; L-isoleucine biosynthesis; L-isoleucine from 2-oxobutanoate: step 4/4.</text>
</comment>
<comment type="pathway">
    <text evidence="17 22 23">Amino-acid biosynthesis; L-leucine biosynthesis; L-leucine from 3-methyl-2-oxobutanoate: step 4/4.</text>
</comment>
<comment type="pathway">
    <text evidence="17 22 23">Amino-acid biosynthesis; L-valine biosynthesis; L-valine from pyruvate: step 4/4.</text>
</comment>
<comment type="pathway">
    <text evidence="16">Amino-acid biosynthesis; L-methionine biosynthesis via salvage pathway; L-methionine from S-methyl-5-thio-alpha-D-ribose 1-phosphate: step 6/6.</text>
</comment>
<comment type="interaction">
    <interactant intactId="EBI-3455">
        <id>P38891</id>
    </interactant>
    <interactant intactId="EBI-3462">
        <id>P47176</id>
        <label>BAT2</label>
    </interactant>
    <organismsDiffer>false</organismsDiffer>
    <experiments>4</experiments>
</comment>
<comment type="subcellular location">
    <subcellularLocation>
        <location evidence="5 11">Mitochondrion matrix</location>
    </subcellularLocation>
</comment>
<comment type="induction">
    <text evidence="5 7 10">Highly expressed during logarithmic phase of growth. Down-regulated during the stationary phase (PubMed:8702755). Mainly expressed on ammonium-glucose exponential cultures (biosynthetic conditions), and repressed in the presence of leucine, isoleucine or valine (PubMed:21267457, PubMed:28912343).</text>
</comment>
<comment type="disruption phenotype">
    <text evidence="8 9 11">Causes delay in G1 phase, slower growth and smaller cells (PubMed:29850466, PubMed:37497662, PubMed:8798704). Lowers the levels of BCAAs and reduces TORC1 activity (PubMed:37497662).</text>
</comment>
<comment type="biotechnology">
    <text evidence="18">Isobutanol and other branched-chain higher alcohols (BCHAs) are promising advanced biofuels derived from the degradation of branched-chain amino acids (BCAAs). Degradation of BCAAs begins with transamination reactions, catalyzed by branched-chain amino acid transaminases (BCATs).</text>
</comment>
<comment type="miscellaneous">
    <text evidence="3">Present with 87300 molecules/cell in log phase SD medium.</text>
</comment>
<comment type="similarity">
    <text evidence="15">Belongs to the class-IV pyridoxal-phosphate-dependent aminotransferase family.</text>
</comment>
<comment type="caution">
    <text evidence="19 20 21 23">PubMed:8692959 reports a shortened G1 stage in the cell cycle, leading to a faster growth rate, while other studies (PubMed:8798704, PubMed:29850466, PubMed:37497662) displayed retarded growth on various growth media.</text>
</comment>
<reference key="1">
    <citation type="journal article" date="1996" name="J. Biol. Chem.">
        <title>Mitochondrial and cytosolic branched-chain amino acid transaminases from yeast, homologs of the myc oncogene-regulated Eca39 protein.</title>
        <authorList>
            <person name="Kispal G."/>
            <person name="Steiner H."/>
            <person name="Court D.A."/>
            <person name="Rolinski B."/>
            <person name="Lill R."/>
        </authorList>
    </citation>
    <scope>NUCLEOTIDE SEQUENCE [GENOMIC DNA]</scope>
    <scope>FUNCTION</scope>
    <scope>CATALYTIC ACTIVITY</scope>
    <scope>SUBCELLULAR LOCATION</scope>
    <scope>DISRUPTION PHENOTYPE</scope>
</reference>
<reference key="2">
    <citation type="journal article" date="1994" name="Science">
        <title>Complete nucleotide sequence of Saccharomyces cerevisiae chromosome VIII.</title>
        <authorList>
            <person name="Johnston M."/>
            <person name="Andrews S."/>
            <person name="Brinkman R."/>
            <person name="Cooper J."/>
            <person name="Ding H."/>
            <person name="Dover J."/>
            <person name="Du Z."/>
            <person name="Favello A."/>
            <person name="Fulton L."/>
            <person name="Gattung S."/>
            <person name="Geisel C."/>
            <person name="Kirsten J."/>
            <person name="Kucaba T."/>
            <person name="Hillier L.W."/>
            <person name="Jier M."/>
            <person name="Johnston L."/>
            <person name="Langston Y."/>
            <person name="Latreille P."/>
            <person name="Louis E.J."/>
            <person name="Macri C."/>
            <person name="Mardis E."/>
            <person name="Menezes S."/>
            <person name="Mouser L."/>
            <person name="Nhan M."/>
            <person name="Rifkin L."/>
            <person name="Riles L."/>
            <person name="St Peter H."/>
            <person name="Trevaskis E."/>
            <person name="Vaughan K."/>
            <person name="Vignati D."/>
            <person name="Wilcox L."/>
            <person name="Wohldman P."/>
            <person name="Waterston R."/>
            <person name="Wilson R."/>
            <person name="Vaudin M."/>
        </authorList>
    </citation>
    <scope>NUCLEOTIDE SEQUENCE [LARGE SCALE GENOMIC DNA]</scope>
    <source>
        <strain>ATCC 204508 / S288c</strain>
    </source>
</reference>
<reference key="3">
    <citation type="journal article" date="2014" name="G3 (Bethesda)">
        <title>The reference genome sequence of Saccharomyces cerevisiae: Then and now.</title>
        <authorList>
            <person name="Engel S.R."/>
            <person name="Dietrich F.S."/>
            <person name="Fisk D.G."/>
            <person name="Binkley G."/>
            <person name="Balakrishnan R."/>
            <person name="Costanzo M.C."/>
            <person name="Dwight S.S."/>
            <person name="Hitz B.C."/>
            <person name="Karra K."/>
            <person name="Nash R.S."/>
            <person name="Weng S."/>
            <person name="Wong E.D."/>
            <person name="Lloyd P."/>
            <person name="Skrzypek M.S."/>
            <person name="Miyasato S.R."/>
            <person name="Simison M."/>
            <person name="Cherry J.M."/>
        </authorList>
    </citation>
    <scope>GENOME REANNOTATION</scope>
    <source>
        <strain>ATCC 204508 / S288c</strain>
    </source>
</reference>
<reference key="4">
    <citation type="journal article" date="2007" name="Genome Res.">
        <title>Approaching a complete repository of sequence-verified protein-encoding clones for Saccharomyces cerevisiae.</title>
        <authorList>
            <person name="Hu Y."/>
            <person name="Rolfs A."/>
            <person name="Bhullar B."/>
            <person name="Murthy T.V.S."/>
            <person name="Zhu C."/>
            <person name="Berger M.F."/>
            <person name="Camargo A.A."/>
            <person name="Kelley F."/>
            <person name="McCarron S."/>
            <person name="Jepson D."/>
            <person name="Richardson A."/>
            <person name="Raphael J."/>
            <person name="Moreira D."/>
            <person name="Taycher E."/>
            <person name="Zuo D."/>
            <person name="Mohr S."/>
            <person name="Kane M.F."/>
            <person name="Williamson J."/>
            <person name="Simpson A.J.G."/>
            <person name="Bulyk M.L."/>
            <person name="Harlow E."/>
            <person name="Marsischky G."/>
            <person name="Kolodner R.D."/>
            <person name="LaBaer J."/>
        </authorList>
    </citation>
    <scope>NUCLEOTIDE SEQUENCE [GENOMIC DNA]</scope>
    <source>
        <strain>ATCC 204508 / S288c</strain>
    </source>
</reference>
<reference key="5">
    <citation type="journal article" date="1996" name="Proc. Natl. Acad. Sci. U.S.A.">
        <title>ECA39, a conserved gene regulated by c-Myc in mice, is involved in G1/S cell cycle regulation in yeast.</title>
        <authorList>
            <person name="Schuldiner O."/>
            <person name="Eden A."/>
            <person name="Ben-Yosef T."/>
            <person name="Yanuka O."/>
            <person name="Simchen G."/>
            <person name="Benvenisty N."/>
        </authorList>
    </citation>
    <scope>DISRUPTION PHENOTYPE</scope>
</reference>
<reference key="6">
    <citation type="journal article" date="1996" name="J. Biol. Chem.">
        <title>Two yeast homologs of ECA39, a target for c-Myc regulation, code for cytosolic and mitochondrial branched-chain amino acid aminotransferases.</title>
        <authorList>
            <person name="Eden A."/>
            <person name="Simchen G."/>
            <person name="Benvenisty N."/>
        </authorList>
    </citation>
    <scope>FUNCTION</scope>
    <scope>INDUCTION</scope>
</reference>
<reference key="7">
    <citation type="journal article" date="1996" name="Oncogene">
        <title>ECA39 is regulated by c-Myc in human and by a Jun/Fos homolog, GCN4, in yeast.</title>
        <authorList>
            <person name="Ben-Yosef T."/>
            <person name="Yanuka O."/>
            <person name="Benvenisty N."/>
        </authorList>
    </citation>
    <scope>REGULATION BY GCN4</scope>
</reference>
<reference key="8">
    <citation type="journal article" date="2003" name="Nature">
        <title>Global analysis of protein expression in yeast.</title>
        <authorList>
            <person name="Ghaemmaghami S."/>
            <person name="Huh W.-K."/>
            <person name="Bower K."/>
            <person name="Howson R.W."/>
            <person name="Belle A."/>
            <person name="Dephoure N."/>
            <person name="O'Shea E.K."/>
            <person name="Weissman J.S."/>
        </authorList>
    </citation>
    <scope>LEVEL OF PROTEIN EXPRESSION [LARGE SCALE ANALYSIS]</scope>
</reference>
<reference key="9">
    <citation type="journal article" date="2008" name="FEBS J.">
        <title>A complete inventory of all enzymes in the eukaryotic methionine salvage pathway.</title>
        <authorList>
            <person name="Pirkov I."/>
            <person name="Norbeck J."/>
            <person name="Gustafsson L."/>
            <person name="Albers E."/>
        </authorList>
    </citation>
    <scope>FUNCTION</scope>
</reference>
<reference key="10">
    <citation type="journal article" date="2008" name="Mol. Cell. Proteomics">
        <title>A multidimensional chromatography technology for in-depth phosphoproteome analysis.</title>
        <authorList>
            <person name="Albuquerque C.P."/>
            <person name="Smolka M.B."/>
            <person name="Payne S.H."/>
            <person name="Bafna V."/>
            <person name="Eng J."/>
            <person name="Zhou H."/>
        </authorList>
    </citation>
    <scope>PHOSPHORYLATION [LARGE SCALE ANALYSIS] AT THR-315</scope>
    <scope>IDENTIFICATION BY MASS SPECTROMETRY [LARGE SCALE ANALYSIS]</scope>
</reference>
<reference key="11">
    <citation type="journal article" date="2011" name="PLoS ONE">
        <title>Saccharomyces cerevisiae Bat1 and Bat2 aminotransferases have functionally diverged from the ancestral-like Kluyveromyces lactis orthologous enzyme.</title>
        <authorList>
            <person name="Colon M."/>
            <person name="Hernandez F."/>
            <person name="Lopez K."/>
            <person name="Quezada H."/>
            <person name="Gonzalez J."/>
            <person name="Lopez G."/>
            <person name="Aranda C."/>
            <person name="Gonzalez A."/>
        </authorList>
    </citation>
    <scope>FUNCTION</scope>
    <scope>SUBCELLULAR LOCATION</scope>
    <scope>INDUCTION</scope>
</reference>
<reference key="12">
    <citation type="journal article" date="2015" name="PLoS Genet.">
        <title>Branched-chain aminotransferases control TORC1 signaling in Saccharomyces cerevisiae.</title>
        <authorList>
            <person name="Kingsbury J.M."/>
            <person name="Sen N.D."/>
            <person name="Cardenas M.E."/>
        </authorList>
    </citation>
    <scope>FUNCTION</scope>
</reference>
<reference key="13">
    <citation type="journal article" date="2017" name="Genetics">
        <title>Diversification of transcriptional regulation determines subfunctionalization of paralogous branched chain aminotransferases in the yeast Saccharomyces cerevisiae.</title>
        <authorList>
            <person name="Gonzalez J."/>
            <person name="Lopez G."/>
            <person name="Argueta S."/>
            <person name="Escalera-Fanjul X."/>
            <person name="El Hafidi M."/>
            <person name="Campero-Basaldua C."/>
            <person name="Strauss J."/>
            <person name="Riego-Ruiz L."/>
            <person name="Gonzalez A."/>
        </authorList>
    </citation>
    <scope>INDUCTION</scope>
</reference>
<reference key="14">
    <citation type="journal article" date="2017" name="Metab. Eng.">
        <title>Uncovering the role of branched-chain amino acid transaminases in Saccharomyces cerevisiae isobutanol biosynthesis.</title>
        <authorList>
            <person name="Hammer S.K."/>
            <person name="Avalos J.L."/>
        </authorList>
    </citation>
    <scope>BIOTECHNOLOGY</scope>
</reference>
<reference key="15">
    <citation type="journal article" date="2020" name="Metab. Eng.">
        <authorList>
            <person name="Hammer S.K."/>
            <person name="Avalos J.L."/>
        </authorList>
    </citation>
    <scope>ERRATUM OF PUBMED:29037781</scope>
</reference>
<reference key="16">
    <citation type="journal article" date="2018" name="Microb. Cell">
        <title>Valine biosynthesis in Saccharomyces cerevisiae is regulated by the mitochondrial branched-chain amino acid aminotransferase Bat1.</title>
        <authorList>
            <person name="Takpho N."/>
            <person name="Watanabe D."/>
            <person name="Takagi H."/>
        </authorList>
    </citation>
    <scope>FUNCTION</scope>
    <scope>DISRUPTION PHENOTYPE</scope>
</reference>
<reference key="17">
    <citation type="journal article" date="2023" name="EMBO Rep.">
        <title>Branched-chain amino acid synthesis is coupled to TOR activation early in the cell cycle in yeast.</title>
        <authorList>
            <person name="Blank H.M."/>
            <person name="Reuse C."/>
            <person name="Schmidt-Hohagen K."/>
            <person name="Hammer S.E."/>
            <person name="Hiller K."/>
            <person name="Polymenis M."/>
        </authorList>
    </citation>
    <scope>FUNCTION</scope>
    <scope>DISRUPTION PHENOTYPE</scope>
</reference>
<proteinExistence type="evidence at protein level"/>
<evidence type="ECO:0000250" key="1">
    <source>
        <dbReference type="UniProtKB" id="P0AB80"/>
    </source>
</evidence>
<evidence type="ECO:0000255" key="2"/>
<evidence type="ECO:0000269" key="3">
    <source>
    </source>
</evidence>
<evidence type="ECO:0000269" key="4">
    <source>
    </source>
</evidence>
<evidence type="ECO:0000269" key="5">
    <source>
    </source>
</evidence>
<evidence type="ECO:0000269" key="6">
    <source>
    </source>
</evidence>
<evidence type="ECO:0000269" key="7">
    <source>
    </source>
</evidence>
<evidence type="ECO:0000269" key="8">
    <source>
    </source>
</evidence>
<evidence type="ECO:0000269" key="9">
    <source>
    </source>
</evidence>
<evidence type="ECO:0000269" key="10">
    <source>
    </source>
</evidence>
<evidence type="ECO:0000269" key="11">
    <source>
    </source>
</evidence>
<evidence type="ECO:0000303" key="12">
    <source>
    </source>
</evidence>
<evidence type="ECO:0000303" key="13">
    <source>
    </source>
</evidence>
<evidence type="ECO:0000303" key="14">
    <source>
    </source>
</evidence>
<evidence type="ECO:0000305" key="15"/>
<evidence type="ECO:0000305" key="16">
    <source>
    </source>
</evidence>
<evidence type="ECO:0000305" key="17">
    <source>
    </source>
</evidence>
<evidence type="ECO:0000305" key="18">
    <source>
    </source>
</evidence>
<evidence type="ECO:0000305" key="19">
    <source>
    </source>
</evidence>
<evidence type="ECO:0000305" key="20">
    <source>
    </source>
</evidence>
<evidence type="ECO:0000305" key="21">
    <source>
    </source>
</evidence>
<evidence type="ECO:0000305" key="22">
    <source>
    </source>
</evidence>
<evidence type="ECO:0000305" key="23">
    <source>
    </source>
</evidence>
<evidence type="ECO:0007744" key="24">
    <source>
    </source>
</evidence>
<dbReference type="EC" id="2.6.1.42" evidence="23"/>
<dbReference type="EMBL" id="X78961">
    <property type="protein sequence ID" value="CAA55556.1"/>
    <property type="molecule type" value="Genomic_DNA"/>
</dbReference>
<dbReference type="EMBL" id="U00029">
    <property type="protein sequence ID" value="AAB69733.1"/>
    <property type="molecule type" value="Genomic_DNA"/>
</dbReference>
<dbReference type="EMBL" id="AY558111">
    <property type="protein sequence ID" value="AAS56437.1"/>
    <property type="molecule type" value="Genomic_DNA"/>
</dbReference>
<dbReference type="EMBL" id="BK006934">
    <property type="protein sequence ID" value="DAA06901.1"/>
    <property type="molecule type" value="Genomic_DNA"/>
</dbReference>
<dbReference type="PIR" id="S48989">
    <property type="entry name" value="S48989"/>
</dbReference>
<dbReference type="RefSeq" id="NP_012078.3">
    <property type="nucleotide sequence ID" value="NM_001179339.3"/>
</dbReference>
<dbReference type="SMR" id="P38891"/>
<dbReference type="BioGRID" id="36642">
    <property type="interactions" value="128"/>
</dbReference>
<dbReference type="DIP" id="DIP-6475N"/>
<dbReference type="FunCoup" id="P38891">
    <property type="interactions" value="805"/>
</dbReference>
<dbReference type="IntAct" id="P38891">
    <property type="interactions" value="21"/>
</dbReference>
<dbReference type="STRING" id="4932.YHR208W"/>
<dbReference type="iPTMnet" id="P38891"/>
<dbReference type="PaxDb" id="4932-YHR208W"/>
<dbReference type="PeptideAtlas" id="P38891"/>
<dbReference type="EnsemblFungi" id="YHR208W_mRNA">
    <property type="protein sequence ID" value="YHR208W"/>
    <property type="gene ID" value="YHR208W"/>
</dbReference>
<dbReference type="GeneID" id="856615"/>
<dbReference type="KEGG" id="sce:YHR208W"/>
<dbReference type="AGR" id="SGD:S000001251"/>
<dbReference type="SGD" id="S000001251">
    <property type="gene designation" value="BAT1"/>
</dbReference>
<dbReference type="VEuPathDB" id="FungiDB:YHR208W"/>
<dbReference type="eggNOG" id="KOG0975">
    <property type="taxonomic scope" value="Eukaryota"/>
</dbReference>
<dbReference type="GeneTree" id="ENSGT00390000009532"/>
<dbReference type="HOGENOM" id="CLU_031922_0_1_1"/>
<dbReference type="InParanoid" id="P38891"/>
<dbReference type="OMA" id="LTEVFAC"/>
<dbReference type="OrthoDB" id="1732691at2759"/>
<dbReference type="BioCyc" id="MetaCyc:YHR208W-MONOMER"/>
<dbReference type="BioCyc" id="YEAST:YHR208W-MONOMER"/>
<dbReference type="BRENDA" id="2.6.1.42">
    <property type="organism ID" value="984"/>
</dbReference>
<dbReference type="Reactome" id="R-SCE-70895">
    <property type="pathway name" value="Branched-chain amino acid catabolism"/>
</dbReference>
<dbReference type="UniPathway" id="UPA00047">
    <property type="reaction ID" value="UER00058"/>
</dbReference>
<dbReference type="UniPathway" id="UPA00048">
    <property type="reaction ID" value="UER00073"/>
</dbReference>
<dbReference type="UniPathway" id="UPA00049">
    <property type="reaction ID" value="UER00062"/>
</dbReference>
<dbReference type="UniPathway" id="UPA00904">
    <property type="reaction ID" value="UER00879"/>
</dbReference>
<dbReference type="BioGRID-ORCS" id="856615">
    <property type="hits" value="6 hits in 10 CRISPR screens"/>
</dbReference>
<dbReference type="PRO" id="PR:P38891"/>
<dbReference type="Proteomes" id="UP000002311">
    <property type="component" value="Chromosome VIII"/>
</dbReference>
<dbReference type="RNAct" id="P38891">
    <property type="molecule type" value="protein"/>
</dbReference>
<dbReference type="GO" id="GO:0005759">
    <property type="term" value="C:mitochondrial matrix"/>
    <property type="evidence" value="ECO:0000314"/>
    <property type="project" value="SGD"/>
</dbReference>
<dbReference type="GO" id="GO:0005739">
    <property type="term" value="C:mitochondrion"/>
    <property type="evidence" value="ECO:0007005"/>
    <property type="project" value="SGD"/>
</dbReference>
<dbReference type="GO" id="GO:0004084">
    <property type="term" value="F:branched-chain-amino-acid transaminase activity"/>
    <property type="evidence" value="ECO:0000314"/>
    <property type="project" value="SGD"/>
</dbReference>
<dbReference type="GO" id="GO:0052656">
    <property type="term" value="F:L-isoleucine-2-oxoglutarate transaminase activity"/>
    <property type="evidence" value="ECO:0007669"/>
    <property type="project" value="RHEA"/>
</dbReference>
<dbReference type="GO" id="GO:0052654">
    <property type="term" value="F:L-leucine-2-oxoglutarate transaminase activity"/>
    <property type="evidence" value="ECO:0007669"/>
    <property type="project" value="RHEA"/>
</dbReference>
<dbReference type="GO" id="GO:0052655">
    <property type="term" value="F:L-valine-2-oxoglutarate transaminase activity"/>
    <property type="evidence" value="ECO:0007669"/>
    <property type="project" value="RHEA"/>
</dbReference>
<dbReference type="GO" id="GO:0010326">
    <property type="term" value="F:methionine-oxo-acid transaminase activity"/>
    <property type="evidence" value="ECO:0007669"/>
    <property type="project" value="RHEA"/>
</dbReference>
<dbReference type="GO" id="GO:0009082">
    <property type="term" value="P:branched-chain amino acid biosynthetic process"/>
    <property type="evidence" value="ECO:0000314"/>
    <property type="project" value="SGD"/>
</dbReference>
<dbReference type="GO" id="GO:0009083">
    <property type="term" value="P:branched-chain amino acid catabolic process"/>
    <property type="evidence" value="ECO:0000315"/>
    <property type="project" value="SGD"/>
</dbReference>
<dbReference type="GO" id="GO:0009097">
    <property type="term" value="P:isoleucine biosynthetic process"/>
    <property type="evidence" value="ECO:0007669"/>
    <property type="project" value="UniProtKB-UniPathway"/>
</dbReference>
<dbReference type="GO" id="GO:0009098">
    <property type="term" value="P:L-leucine biosynthetic process"/>
    <property type="evidence" value="ECO:0000318"/>
    <property type="project" value="GO_Central"/>
</dbReference>
<dbReference type="GO" id="GO:0019509">
    <property type="term" value="P:L-methionine salvage from methylthioadenosine"/>
    <property type="evidence" value="ECO:0007669"/>
    <property type="project" value="UniProtKB-UniPathway"/>
</dbReference>
<dbReference type="GO" id="GO:0009099">
    <property type="term" value="P:L-valine biosynthetic process"/>
    <property type="evidence" value="ECO:0000318"/>
    <property type="project" value="GO_Central"/>
</dbReference>
<dbReference type="CDD" id="cd01557">
    <property type="entry name" value="BCAT_beta_family"/>
    <property type="match status" value="1"/>
</dbReference>
<dbReference type="FunFam" id="3.20.10.10:FF:000004">
    <property type="entry name" value="Branched-chain-amino-acid aminotransferase"/>
    <property type="match status" value="1"/>
</dbReference>
<dbReference type="FunFam" id="3.30.470.10:FF:000005">
    <property type="entry name" value="Branched-chain-amino-acid aminotransferase"/>
    <property type="match status" value="1"/>
</dbReference>
<dbReference type="Gene3D" id="3.30.470.10">
    <property type="match status" value="1"/>
</dbReference>
<dbReference type="Gene3D" id="3.20.10.10">
    <property type="entry name" value="D-amino Acid Aminotransferase, subunit A, domain 2"/>
    <property type="match status" value="1"/>
</dbReference>
<dbReference type="InterPro" id="IPR001544">
    <property type="entry name" value="Aminotrans_IV"/>
</dbReference>
<dbReference type="InterPro" id="IPR018300">
    <property type="entry name" value="Aminotrans_IV_CS"/>
</dbReference>
<dbReference type="InterPro" id="IPR036038">
    <property type="entry name" value="Aminotransferase-like"/>
</dbReference>
<dbReference type="InterPro" id="IPR005786">
    <property type="entry name" value="B_amino_transII"/>
</dbReference>
<dbReference type="InterPro" id="IPR043132">
    <property type="entry name" value="BCAT-like_C"/>
</dbReference>
<dbReference type="InterPro" id="IPR043131">
    <property type="entry name" value="BCAT-like_N"/>
</dbReference>
<dbReference type="InterPro" id="IPR033939">
    <property type="entry name" value="BCAT_family"/>
</dbReference>
<dbReference type="NCBIfam" id="TIGR01123">
    <property type="entry name" value="ilvE_II"/>
    <property type="match status" value="1"/>
</dbReference>
<dbReference type="NCBIfam" id="NF009897">
    <property type="entry name" value="PRK13357.1"/>
    <property type="match status" value="1"/>
</dbReference>
<dbReference type="PANTHER" id="PTHR11825:SF44">
    <property type="entry name" value="BRANCHED-CHAIN-AMINO-ACID AMINOTRANSFERASE"/>
    <property type="match status" value="1"/>
</dbReference>
<dbReference type="PANTHER" id="PTHR11825">
    <property type="entry name" value="SUBGROUP IIII AMINOTRANSFERASE"/>
    <property type="match status" value="1"/>
</dbReference>
<dbReference type="Pfam" id="PF01063">
    <property type="entry name" value="Aminotran_4"/>
    <property type="match status" value="1"/>
</dbReference>
<dbReference type="PIRSF" id="PIRSF006468">
    <property type="entry name" value="BCAT1"/>
    <property type="match status" value="1"/>
</dbReference>
<dbReference type="SUPFAM" id="SSF56752">
    <property type="entry name" value="D-aminoacid aminotransferase-like PLP-dependent enzymes"/>
    <property type="match status" value="1"/>
</dbReference>
<dbReference type="PROSITE" id="PS00770">
    <property type="entry name" value="AA_TRANSFER_CLASS_4"/>
    <property type="match status" value="1"/>
</dbReference>
<accession>P38891</accession>
<accession>D3DLF7</accession>
<keyword id="KW-0028">Amino-acid biosynthesis</keyword>
<keyword id="KW-0032">Aminotransferase</keyword>
<keyword id="KW-0100">Branched-chain amino acid biosynthesis</keyword>
<keyword id="KW-0496">Mitochondrion</keyword>
<keyword id="KW-0597">Phosphoprotein</keyword>
<keyword id="KW-0663">Pyridoxal phosphate</keyword>
<keyword id="KW-1185">Reference proteome</keyword>
<keyword id="KW-0808">Transferase</keyword>
<keyword id="KW-0809">Transit peptide</keyword>
<gene>
    <name evidence="14" type="primary">BAT1</name>
    <name evidence="12 13" type="synonym">ECA39</name>
    <name type="synonym">TWT1</name>
    <name type="ordered locus">YHR208W</name>
</gene>
<protein>
    <recommendedName>
        <fullName evidence="15">Branched-chain-amino-acid aminotransferase, mitochondrial</fullName>
        <shortName>BCAT</shortName>
        <ecNumber evidence="23">2.6.1.42</ecNumber>
    </recommendedName>
    <alternativeName>
        <fullName>Protein ECA39</fullName>
    </alternativeName>
    <alternativeName>
        <fullName>Protein TWT1</fullName>
    </alternativeName>
</protein>